<feature type="chain" id="PRO_0000121790" description="tRNA pseudouridine synthase B">
    <location>
        <begin position="1"/>
        <end position="307"/>
    </location>
</feature>
<feature type="active site" description="Nucleophile" evidence="1">
    <location>
        <position position="38"/>
    </location>
</feature>
<name>TRUB_BACHK</name>
<organism>
    <name type="scientific">Bacillus thuringiensis subsp. konkukian (strain 97-27)</name>
    <dbReference type="NCBI Taxonomy" id="281309"/>
    <lineage>
        <taxon>Bacteria</taxon>
        <taxon>Bacillati</taxon>
        <taxon>Bacillota</taxon>
        <taxon>Bacilli</taxon>
        <taxon>Bacillales</taxon>
        <taxon>Bacillaceae</taxon>
        <taxon>Bacillus</taxon>
        <taxon>Bacillus cereus group</taxon>
    </lineage>
</organism>
<evidence type="ECO:0000255" key="1">
    <source>
        <dbReference type="HAMAP-Rule" id="MF_01080"/>
    </source>
</evidence>
<sequence length="307" mass="34502">MEGVVLLHKPKGMTSHDCVFKLRKILREKRIGHTGTLDPDVTGVLPICVGRATKIAQFLTSETKTYEGEVTLGFSTTTEDASGEVVETKHVDRVITRKEVEGALAALTGTIEQMPPMFSAVKVNGKKLYEYARAGQEVERPVRTITIHEFVLLDDREVFEGETISFRFRVTCSKGTYVRTLAVMIGEKLGFPSHMSHLVRTASGEFLLEDCISFEEIEENVQNGTVESIFISIDEALSKFPKMVVDEKQAEKIKNGMFLKNELQITAPFITVFDKNDRCLAIYEHHPKHPGMLKPMKVLVNNQELKL</sequence>
<accession>Q6HF05</accession>
<proteinExistence type="inferred from homology"/>
<comment type="function">
    <text evidence="1">Responsible for synthesis of pseudouridine from uracil-55 in the psi GC loop of transfer RNAs.</text>
</comment>
<comment type="catalytic activity">
    <reaction evidence="1">
        <text>uridine(55) in tRNA = pseudouridine(55) in tRNA</text>
        <dbReference type="Rhea" id="RHEA:42532"/>
        <dbReference type="Rhea" id="RHEA-COMP:10101"/>
        <dbReference type="Rhea" id="RHEA-COMP:10102"/>
        <dbReference type="ChEBI" id="CHEBI:65314"/>
        <dbReference type="ChEBI" id="CHEBI:65315"/>
        <dbReference type="EC" id="5.4.99.25"/>
    </reaction>
</comment>
<comment type="similarity">
    <text evidence="1">Belongs to the pseudouridine synthase TruB family. Type 1 subfamily.</text>
</comment>
<gene>
    <name evidence="1" type="primary">truB</name>
    <name type="ordered locus">BT9727_3551</name>
</gene>
<dbReference type="EC" id="5.4.99.25" evidence="1"/>
<dbReference type="EMBL" id="AE017355">
    <property type="protein sequence ID" value="AAT60591.1"/>
    <property type="molecule type" value="Genomic_DNA"/>
</dbReference>
<dbReference type="RefSeq" id="WP_000399346.1">
    <property type="nucleotide sequence ID" value="NC_005957.1"/>
</dbReference>
<dbReference type="RefSeq" id="YP_037871.1">
    <property type="nucleotide sequence ID" value="NC_005957.1"/>
</dbReference>
<dbReference type="SMR" id="Q6HF05"/>
<dbReference type="KEGG" id="btk:BT9727_3551"/>
<dbReference type="PATRIC" id="fig|281309.8.peg.3788"/>
<dbReference type="HOGENOM" id="CLU_032087_0_1_9"/>
<dbReference type="Proteomes" id="UP000001301">
    <property type="component" value="Chromosome"/>
</dbReference>
<dbReference type="GO" id="GO:0003723">
    <property type="term" value="F:RNA binding"/>
    <property type="evidence" value="ECO:0007669"/>
    <property type="project" value="InterPro"/>
</dbReference>
<dbReference type="GO" id="GO:0160148">
    <property type="term" value="F:tRNA pseudouridine(55) synthase activity"/>
    <property type="evidence" value="ECO:0007669"/>
    <property type="project" value="UniProtKB-EC"/>
</dbReference>
<dbReference type="GO" id="GO:1990481">
    <property type="term" value="P:mRNA pseudouridine synthesis"/>
    <property type="evidence" value="ECO:0007669"/>
    <property type="project" value="TreeGrafter"/>
</dbReference>
<dbReference type="GO" id="GO:0031119">
    <property type="term" value="P:tRNA pseudouridine synthesis"/>
    <property type="evidence" value="ECO:0007669"/>
    <property type="project" value="UniProtKB-UniRule"/>
</dbReference>
<dbReference type="CDD" id="cd02573">
    <property type="entry name" value="PseudoU_synth_EcTruB"/>
    <property type="match status" value="1"/>
</dbReference>
<dbReference type="FunFam" id="3.30.2350.10:FF:000011">
    <property type="entry name" value="tRNA pseudouridine synthase B"/>
    <property type="match status" value="1"/>
</dbReference>
<dbReference type="Gene3D" id="3.30.2350.10">
    <property type="entry name" value="Pseudouridine synthase"/>
    <property type="match status" value="1"/>
</dbReference>
<dbReference type="HAMAP" id="MF_01080">
    <property type="entry name" value="TruB_bact"/>
    <property type="match status" value="1"/>
</dbReference>
<dbReference type="InterPro" id="IPR020103">
    <property type="entry name" value="PsdUridine_synth_cat_dom_sf"/>
</dbReference>
<dbReference type="InterPro" id="IPR002501">
    <property type="entry name" value="PsdUridine_synth_N"/>
</dbReference>
<dbReference type="InterPro" id="IPR014780">
    <property type="entry name" value="tRNA_psdUridine_synth_TruB"/>
</dbReference>
<dbReference type="InterPro" id="IPR032819">
    <property type="entry name" value="TruB_C"/>
</dbReference>
<dbReference type="NCBIfam" id="TIGR00431">
    <property type="entry name" value="TruB"/>
    <property type="match status" value="1"/>
</dbReference>
<dbReference type="PANTHER" id="PTHR13767:SF2">
    <property type="entry name" value="PSEUDOURIDYLATE SYNTHASE TRUB1"/>
    <property type="match status" value="1"/>
</dbReference>
<dbReference type="PANTHER" id="PTHR13767">
    <property type="entry name" value="TRNA-PSEUDOURIDINE SYNTHASE"/>
    <property type="match status" value="1"/>
</dbReference>
<dbReference type="Pfam" id="PF16198">
    <property type="entry name" value="TruB_C_2"/>
    <property type="match status" value="1"/>
</dbReference>
<dbReference type="Pfam" id="PF01509">
    <property type="entry name" value="TruB_N"/>
    <property type="match status" value="1"/>
</dbReference>
<dbReference type="SUPFAM" id="SSF55120">
    <property type="entry name" value="Pseudouridine synthase"/>
    <property type="match status" value="1"/>
</dbReference>
<keyword id="KW-0413">Isomerase</keyword>
<keyword id="KW-0819">tRNA processing</keyword>
<protein>
    <recommendedName>
        <fullName evidence="1">tRNA pseudouridine synthase B</fullName>
        <ecNumber evidence="1">5.4.99.25</ecNumber>
    </recommendedName>
    <alternativeName>
        <fullName evidence="1">tRNA pseudouridine(55) synthase</fullName>
        <shortName evidence="1">Psi55 synthase</shortName>
    </alternativeName>
    <alternativeName>
        <fullName evidence="1">tRNA pseudouridylate synthase</fullName>
    </alternativeName>
    <alternativeName>
        <fullName evidence="1">tRNA-uridine isomerase</fullName>
    </alternativeName>
</protein>
<reference key="1">
    <citation type="journal article" date="2006" name="J. Bacteriol.">
        <title>Pathogenomic sequence analysis of Bacillus cereus and Bacillus thuringiensis isolates closely related to Bacillus anthracis.</title>
        <authorList>
            <person name="Han C.S."/>
            <person name="Xie G."/>
            <person name="Challacombe J.F."/>
            <person name="Altherr M.R."/>
            <person name="Bhotika S.S."/>
            <person name="Bruce D."/>
            <person name="Campbell C.S."/>
            <person name="Campbell M.L."/>
            <person name="Chen J."/>
            <person name="Chertkov O."/>
            <person name="Cleland C."/>
            <person name="Dimitrijevic M."/>
            <person name="Doggett N.A."/>
            <person name="Fawcett J.J."/>
            <person name="Glavina T."/>
            <person name="Goodwin L.A."/>
            <person name="Hill K.K."/>
            <person name="Hitchcock P."/>
            <person name="Jackson P.J."/>
            <person name="Keim P."/>
            <person name="Kewalramani A.R."/>
            <person name="Longmire J."/>
            <person name="Lucas S."/>
            <person name="Malfatti S."/>
            <person name="McMurry K."/>
            <person name="Meincke L.J."/>
            <person name="Misra M."/>
            <person name="Moseman B.L."/>
            <person name="Mundt M."/>
            <person name="Munk A.C."/>
            <person name="Okinaka R.T."/>
            <person name="Parson-Quintana B."/>
            <person name="Reilly L.P."/>
            <person name="Richardson P."/>
            <person name="Robinson D.L."/>
            <person name="Rubin E."/>
            <person name="Saunders E."/>
            <person name="Tapia R."/>
            <person name="Tesmer J.G."/>
            <person name="Thayer N."/>
            <person name="Thompson L.S."/>
            <person name="Tice H."/>
            <person name="Ticknor L.O."/>
            <person name="Wills P.L."/>
            <person name="Brettin T.S."/>
            <person name="Gilna P."/>
        </authorList>
    </citation>
    <scope>NUCLEOTIDE SEQUENCE [LARGE SCALE GENOMIC DNA]</scope>
    <source>
        <strain>97-27</strain>
    </source>
</reference>